<gene>
    <name type="primary">C</name>
</gene>
<keyword id="KW-0945">Host-virus interaction</keyword>
<keyword id="KW-1185">Reference proteome</keyword>
<name>C_BPPHS</name>
<organism>
    <name type="scientific">Enterobacteria phage phiX174</name>
    <name type="common">Isolate Sanger</name>
    <name type="synonym">Bacteriophage phi-X174</name>
    <dbReference type="NCBI Taxonomy" id="1217068"/>
    <lineage>
        <taxon>Viruses</taxon>
        <taxon>Monodnaviria</taxon>
        <taxon>Sangervirae</taxon>
        <taxon>Phixviricota</taxon>
        <taxon>Malgrandaviricetes</taxon>
        <taxon>Petitvirales</taxon>
        <taxon>Microviridae</taxon>
        <taxon>Bullavirinae</taxon>
        <taxon>Sinsheimervirus</taxon>
        <taxon>Escherichia phage phiX174</taxon>
    </lineage>
</organism>
<feature type="chain" id="PRO_0000164875" description="Protein C">
    <location>
        <begin position="1"/>
        <end position="86"/>
    </location>
</feature>
<comment type="function">
    <text evidence="1 2">Plays a central role in the packaging of viral DNA into phage procapsid, which occurs in the late stage of infection. The protein C can interact with the replicative complex composed of the protein A, the host rep and the viral DNA after the completion of one round of DNA synthesis. When protein C is bound to the replicative form, the complex becomes accessible to procapsid and serves as a DNA packaging apparatus.</text>
</comment>
<comment type="similarity">
    <text evidence="3">Belongs to the microviridae C protein family.</text>
</comment>
<reference key="1">
    <citation type="journal article" date="1977" name="Nature">
        <title>Nucleotide sequence of bacteriophage phi X174 DNA.</title>
        <authorList>
            <person name="Sanger F."/>
            <person name="Air G.M."/>
            <person name="Barrell B.G."/>
            <person name="Brown N.L."/>
            <person name="Coulson A.R."/>
            <person name="Fiddes J.C."/>
            <person name="Hutchison C.A. III"/>
            <person name="Slocombe P.M."/>
            <person name="Smith M."/>
        </authorList>
    </citation>
    <scope>NUCLEOTIDE SEQUENCE [GENOMIC DNA]</scope>
</reference>
<reference key="2">
    <citation type="journal article" date="1978" name="J. Mol. Biol.">
        <title>The nucleotide sequence of bacteriophage phiX174.</title>
        <authorList>
            <person name="Sanger F."/>
            <person name="Coulson A.R."/>
            <person name="Friedmann T."/>
            <person name="Air G.M."/>
            <person name="Barrell B.G."/>
            <person name="Brown N.L."/>
            <person name="Fiddes J.C."/>
            <person name="Hutchison C.A. III"/>
            <person name="Slocombe P.M."/>
            <person name="Smith M."/>
        </authorList>
    </citation>
    <scope>SEQUENCE REVISION</scope>
</reference>
<reference key="3">
    <citation type="journal article" date="1986" name="Cell">
        <title>Synthesis of bacteriophage phi X174 in vitro: mechanism of switch from DNA replication to DNA packaging.</title>
        <authorList>
            <person name="Aoyama A."/>
            <person name="Hayashi M."/>
        </authorList>
    </citation>
    <scope>FUNCTION</scope>
</reference>
<reference key="4">
    <citation type="journal article" date="1988" name="J. Biol. Chem.">
        <title>Effect of phi X C protein on leading strand DNA synthesis in the phi X174 replication pathway.</title>
        <authorList>
            <person name="Goetz G.S."/>
            <person name="Englard S."/>
            <person name="Schmidt-Glenewinkel T."/>
            <person name="Aoyama A."/>
            <person name="Hayashi M."/>
            <person name="Hurwitz J."/>
        </authorList>
    </citation>
    <scope>FUNCTION</scope>
</reference>
<dbReference type="EMBL" id="J02482">
    <property type="protein sequence ID" value="AAA32574.1"/>
    <property type="molecule type" value="Genomic_DNA"/>
</dbReference>
<dbReference type="PIR" id="A93185">
    <property type="entry name" value="ZCBPF4"/>
</dbReference>
<dbReference type="SMR" id="P69172"/>
<dbReference type="KEGG" id="vg:2546402"/>
<dbReference type="Proteomes" id="UP000005893">
    <property type="component" value="Segment"/>
</dbReference>
<dbReference type="GO" id="GO:0019073">
    <property type="term" value="P:viral DNA genome packaging"/>
    <property type="evidence" value="ECO:0007669"/>
    <property type="project" value="InterPro"/>
</dbReference>
<dbReference type="InterPro" id="IPR016407">
    <property type="entry name" value="C-protein"/>
</dbReference>
<dbReference type="Pfam" id="PF12025">
    <property type="entry name" value="Phage_C"/>
    <property type="match status" value="1"/>
</dbReference>
<dbReference type="PIRSF" id="PIRSF004155">
    <property type="entry name" value="Phage_C"/>
    <property type="match status" value="1"/>
</dbReference>
<organismHost>
    <name type="scientific">Escherichia coli C</name>
    <dbReference type="NCBI Taxonomy" id="498388"/>
</organismHost>
<accession>P69172</accession>
<accession>P03635</accession>
<protein>
    <recommendedName>
        <fullName>Protein C</fullName>
    </recommendedName>
</protein>
<evidence type="ECO:0000269" key="1">
    <source>
    </source>
</evidence>
<evidence type="ECO:0000269" key="2">
    <source>
    </source>
</evidence>
<evidence type="ECO:0000305" key="3"/>
<proteinExistence type="inferred from homology"/>
<sequence length="86" mass="10081">MRKFDLSLRSSRSSYFATFRHQLTILSKTDALDEEKWLNMLGTFVKDWFRYESHFVHGRDSLVDILKERGLLSESDAVQPLIGKKS</sequence>